<accession>Q14746</accession>
<accession>Q86U99</accession>
<evidence type="ECO:0000256" key="1">
    <source>
        <dbReference type="SAM" id="MobiDB-lite"/>
    </source>
</evidence>
<evidence type="ECO:0000269" key="2">
    <source>
    </source>
</evidence>
<evidence type="ECO:0000303" key="3">
    <source>
    </source>
</evidence>
<evidence type="ECO:0000305" key="4"/>
<protein>
    <recommendedName>
        <fullName>Conserved oligomeric Golgi complex subunit 2</fullName>
        <shortName>COG complex subunit 2</shortName>
    </recommendedName>
    <alternativeName>
        <fullName>Component of oligomeric Golgi complex 2</fullName>
    </alternativeName>
    <alternativeName>
        <fullName>Low density lipoprotein receptor defect C-complementing protein</fullName>
    </alternativeName>
</protein>
<comment type="function">
    <text>Required for normal Golgi morphology and function.</text>
</comment>
<comment type="subunit">
    <text>Component of the conserved oligomeric Golgi complex which is composed of eight different subunits and is required for normal Golgi morphology and localization.</text>
</comment>
<comment type="interaction">
    <interactant intactId="EBI-389449">
        <id>Q14746</id>
    </interactant>
    <interactant intactId="EBI-11975967">
        <id>Q76N32-2</id>
        <label>CEP68</label>
    </interactant>
    <organismsDiffer>false</organismsDiffer>
    <experiments>3</experiments>
</comment>
<comment type="interaction">
    <interactant intactId="EBI-389449">
        <id>Q14746</id>
    </interactant>
    <interactant intactId="EBI-368382">
        <id>Q9H9E3</id>
        <label>COG4</label>
    </interactant>
    <organismsDiffer>false</organismsDiffer>
    <experiments>5</experiments>
</comment>
<comment type="interaction">
    <interactant intactId="EBI-389449">
        <id>Q14746</id>
    </interactant>
    <interactant intactId="EBI-739546">
        <id>Q96PV6</id>
        <label>LENG8</label>
    </interactant>
    <organismsDiffer>false</organismsDiffer>
    <experiments>3</experiments>
</comment>
<comment type="interaction">
    <interactant intactId="EBI-389449">
        <id>Q14746</id>
    </interactant>
    <interactant intactId="EBI-1216080">
        <id>Q9Y250</id>
        <label>LZTS1</label>
    </interactant>
    <organismsDiffer>false</organismsDiffer>
    <experiments>3</experiments>
</comment>
<comment type="interaction">
    <interactant intactId="EBI-389449">
        <id>Q14746</id>
    </interactant>
    <interactant intactId="EBI-11522433">
        <id>Q5JR59-3</id>
        <label>MTUS2</label>
    </interactant>
    <organismsDiffer>false</organismsDiffer>
    <experiments>4</experiments>
</comment>
<comment type="interaction">
    <interactant intactId="EBI-10233912">
        <id>Q14746-2</id>
    </interactant>
    <interactant intactId="EBI-742948">
        <id>Q5JR59</id>
        <label>MTUS2</label>
    </interactant>
    <organismsDiffer>false</organismsDiffer>
    <experiments>3</experiments>
</comment>
<comment type="subcellular location">
    <subcellularLocation>
        <location evidence="4">Golgi apparatus membrane</location>
        <topology evidence="4">Peripheral membrane protein</topology>
        <orientation evidence="4">Cytoplasmic side</orientation>
    </subcellularLocation>
</comment>
<comment type="alternative products">
    <event type="alternative splicing"/>
    <isoform>
        <id>Q14746-1</id>
        <name>1</name>
        <sequence type="displayed"/>
    </isoform>
    <isoform>
        <id>Q14746-2</id>
        <name>2</name>
        <sequence type="described" ref="VSP_042942"/>
    </isoform>
</comment>
<comment type="disease" evidence="2">
    <disease id="DI-04971">
        <name>Congenital disorder of glycosylation 2Q</name>
        <acronym>CDG2Q</acronym>
        <description>A form of congenital disorder of glycosylation, a genetically heterogeneous group of autosomal recessive, multisystem disorders caused by a defect in glycoprotein biosynthesis and characterized by under-glycosylated serum glycoproteins. Congenital disorders of glycosylation result in a wide variety of clinical features, such as defects in the nervous system development, psychomotor retardation, dysmorphic features, hypotonia, coagulation disorders, and immunodeficiency. The broad spectrum of features reflects the critical role of N-glycoproteins during embryonic development, differentiation, and maintenance of cell functions. The transmission pattern of CDG2Q is consistent with autosomal recessive inheritance.</description>
        <dbReference type="MIM" id="617395"/>
    </disease>
    <text>The disease is caused by variants affecting the gene represented in this entry.</text>
</comment>
<comment type="similarity">
    <text evidence="4">Belongs to the COG2 family.</text>
</comment>
<keyword id="KW-0025">Alternative splicing</keyword>
<keyword id="KW-0900">Congenital disorder of glycosylation</keyword>
<keyword id="KW-0225">Disease variant</keyword>
<keyword id="KW-0333">Golgi apparatus</keyword>
<keyword id="KW-0472">Membrane</keyword>
<keyword id="KW-0653">Protein transport</keyword>
<keyword id="KW-1267">Proteomics identification</keyword>
<keyword id="KW-1185">Reference proteome</keyword>
<keyword id="KW-0813">Transport</keyword>
<gene>
    <name type="primary">COG2</name>
    <name type="synonym">LDLC</name>
</gene>
<name>COG2_HUMAN</name>
<proteinExistence type="evidence at protein level"/>
<sequence>MEKSRMNLPKGPDTLCFDKDEFMKEDFDVDHFVSDCRKRVQLEELRDDLELYYKLLKTAMVELINKDYADFVNLSTNLVGMDKALNQLSVPLGQLREEVLSLRSSVSEGIRAVDERMSKQEDIRKKKMCVLRLIQVIRSVEKIEKILNSQSSKETSALEASSPLLTGQILERIATEFNQLQFHAVQSKGMPLLDKVRPRIAGITAMLQQSLEGLLLEGLQTSDVDIIRHCLRTYATIDKTRDAEALVGQVLVKPYIDEVIIEQFVESHPNGLQVMYNKLLEFVPHHCRLLREVTGGAISSEKGNTVPGYDFLVNSVWPQIVQGLEEKLPSLFNPGNPDAFHEKYTISMDFVRRLERQCGSQASVKRLRAHPAYHSFNKKWNLPVYFQIRFREIAGSLEAALTDVLEDAPAESPYCLLASHRTWSSLRRCWSDEMFLPLLVHRLWRLTLQILARYSVFVNELSLRPISNESPKEIKKPLVTGSKEPSITQGNTEDQGSGPSETKPVVSISRTQLVYVVADLDKLQEQLPELLEIIKPKLEMIGFKNFSSISAALEDSQSSFSACVPSLSSKIIQDLSDSCFGFLKSALEVPRLYRRTNKEVPTTASSYVDSALKPLFQLQSGHKDKLKQAIIQQWLEGTLSESTHKYYETVSDVLNSVKKMEESLKRLKQARKTTPANPVGPSGGMSDDDKIRLQLALDVEYLGEQIQKLGLQASDIKSFSALAELVAAAKDQATAEQP</sequence>
<reference key="1">
    <citation type="journal article" date="1994" name="J. Cell Biol.">
        <title>LDLC encodes a brefeldin A-sensitive, peripheral Golgi protein required for normal Golgi function.</title>
        <authorList>
            <person name="Podos S.D."/>
            <person name="Reddy P."/>
            <person name="Ashkenas J."/>
            <person name="Krieger M."/>
        </authorList>
    </citation>
    <scope>NUCLEOTIDE SEQUENCE [MRNA] (ISOFORM 1)</scope>
</reference>
<reference key="2">
    <citation type="journal article" date="2006" name="Nature">
        <title>The DNA sequence and biological annotation of human chromosome 1.</title>
        <authorList>
            <person name="Gregory S.G."/>
            <person name="Barlow K.F."/>
            <person name="McLay K.E."/>
            <person name="Kaul R."/>
            <person name="Swarbreck D."/>
            <person name="Dunham A."/>
            <person name="Scott C.E."/>
            <person name="Howe K.L."/>
            <person name="Woodfine K."/>
            <person name="Spencer C.C.A."/>
            <person name="Jones M.C."/>
            <person name="Gillson C."/>
            <person name="Searle S."/>
            <person name="Zhou Y."/>
            <person name="Kokocinski F."/>
            <person name="McDonald L."/>
            <person name="Evans R."/>
            <person name="Phillips K."/>
            <person name="Atkinson A."/>
            <person name="Cooper R."/>
            <person name="Jones C."/>
            <person name="Hall R.E."/>
            <person name="Andrews T.D."/>
            <person name="Lloyd C."/>
            <person name="Ainscough R."/>
            <person name="Almeida J.P."/>
            <person name="Ambrose K.D."/>
            <person name="Anderson F."/>
            <person name="Andrew R.W."/>
            <person name="Ashwell R.I.S."/>
            <person name="Aubin K."/>
            <person name="Babbage A.K."/>
            <person name="Bagguley C.L."/>
            <person name="Bailey J."/>
            <person name="Beasley H."/>
            <person name="Bethel G."/>
            <person name="Bird C.P."/>
            <person name="Bray-Allen S."/>
            <person name="Brown J.Y."/>
            <person name="Brown A.J."/>
            <person name="Buckley D."/>
            <person name="Burton J."/>
            <person name="Bye J."/>
            <person name="Carder C."/>
            <person name="Chapman J.C."/>
            <person name="Clark S.Y."/>
            <person name="Clarke G."/>
            <person name="Clee C."/>
            <person name="Cobley V."/>
            <person name="Collier R.E."/>
            <person name="Corby N."/>
            <person name="Coville G.J."/>
            <person name="Davies J."/>
            <person name="Deadman R."/>
            <person name="Dunn M."/>
            <person name="Earthrowl M."/>
            <person name="Ellington A.G."/>
            <person name="Errington H."/>
            <person name="Frankish A."/>
            <person name="Frankland J."/>
            <person name="French L."/>
            <person name="Garner P."/>
            <person name="Garnett J."/>
            <person name="Gay L."/>
            <person name="Ghori M.R.J."/>
            <person name="Gibson R."/>
            <person name="Gilby L.M."/>
            <person name="Gillett W."/>
            <person name="Glithero R.J."/>
            <person name="Grafham D.V."/>
            <person name="Griffiths C."/>
            <person name="Griffiths-Jones S."/>
            <person name="Grocock R."/>
            <person name="Hammond S."/>
            <person name="Harrison E.S.I."/>
            <person name="Hart E."/>
            <person name="Haugen E."/>
            <person name="Heath P.D."/>
            <person name="Holmes S."/>
            <person name="Holt K."/>
            <person name="Howden P.J."/>
            <person name="Hunt A.R."/>
            <person name="Hunt S.E."/>
            <person name="Hunter G."/>
            <person name="Isherwood J."/>
            <person name="James R."/>
            <person name="Johnson C."/>
            <person name="Johnson D."/>
            <person name="Joy A."/>
            <person name="Kay M."/>
            <person name="Kershaw J.K."/>
            <person name="Kibukawa M."/>
            <person name="Kimberley A.M."/>
            <person name="King A."/>
            <person name="Knights A.J."/>
            <person name="Lad H."/>
            <person name="Laird G."/>
            <person name="Lawlor S."/>
            <person name="Leongamornlert D.A."/>
            <person name="Lloyd D.M."/>
            <person name="Loveland J."/>
            <person name="Lovell J."/>
            <person name="Lush M.J."/>
            <person name="Lyne R."/>
            <person name="Martin S."/>
            <person name="Mashreghi-Mohammadi M."/>
            <person name="Matthews L."/>
            <person name="Matthews N.S.W."/>
            <person name="McLaren S."/>
            <person name="Milne S."/>
            <person name="Mistry S."/>
            <person name="Moore M.J.F."/>
            <person name="Nickerson T."/>
            <person name="O'Dell C.N."/>
            <person name="Oliver K."/>
            <person name="Palmeiri A."/>
            <person name="Palmer S.A."/>
            <person name="Parker A."/>
            <person name="Patel D."/>
            <person name="Pearce A.V."/>
            <person name="Peck A.I."/>
            <person name="Pelan S."/>
            <person name="Phelps K."/>
            <person name="Phillimore B.J."/>
            <person name="Plumb R."/>
            <person name="Rajan J."/>
            <person name="Raymond C."/>
            <person name="Rouse G."/>
            <person name="Saenphimmachak C."/>
            <person name="Sehra H.K."/>
            <person name="Sheridan E."/>
            <person name="Shownkeen R."/>
            <person name="Sims S."/>
            <person name="Skuce C.D."/>
            <person name="Smith M."/>
            <person name="Steward C."/>
            <person name="Subramanian S."/>
            <person name="Sycamore N."/>
            <person name="Tracey A."/>
            <person name="Tromans A."/>
            <person name="Van Helmond Z."/>
            <person name="Wall M."/>
            <person name="Wallis J.M."/>
            <person name="White S."/>
            <person name="Whitehead S.L."/>
            <person name="Wilkinson J.E."/>
            <person name="Willey D.L."/>
            <person name="Williams H."/>
            <person name="Wilming L."/>
            <person name="Wray P.W."/>
            <person name="Wu Z."/>
            <person name="Coulson A."/>
            <person name="Vaudin M."/>
            <person name="Sulston J.E."/>
            <person name="Durbin R.M."/>
            <person name="Hubbard T."/>
            <person name="Wooster R."/>
            <person name="Dunham I."/>
            <person name="Carter N.P."/>
            <person name="McVean G."/>
            <person name="Ross M.T."/>
            <person name="Harrow J."/>
            <person name="Olson M.V."/>
            <person name="Beck S."/>
            <person name="Rogers J."/>
            <person name="Bentley D.R."/>
        </authorList>
    </citation>
    <scope>NUCLEOTIDE SEQUENCE [LARGE SCALE GENOMIC DNA]</scope>
</reference>
<reference key="3">
    <citation type="submission" date="2005-07" db="EMBL/GenBank/DDBJ databases">
        <authorList>
            <person name="Mural R.J."/>
            <person name="Istrail S."/>
            <person name="Sutton G."/>
            <person name="Florea L."/>
            <person name="Halpern A.L."/>
            <person name="Mobarry C.M."/>
            <person name="Lippert R."/>
            <person name="Walenz B."/>
            <person name="Shatkay H."/>
            <person name="Dew I."/>
            <person name="Miller J.R."/>
            <person name="Flanigan M.J."/>
            <person name="Edwards N.J."/>
            <person name="Bolanos R."/>
            <person name="Fasulo D."/>
            <person name="Halldorsson B.V."/>
            <person name="Hannenhalli S."/>
            <person name="Turner R."/>
            <person name="Yooseph S."/>
            <person name="Lu F."/>
            <person name="Nusskern D.R."/>
            <person name="Shue B.C."/>
            <person name="Zheng X.H."/>
            <person name="Zhong F."/>
            <person name="Delcher A.L."/>
            <person name="Huson D.H."/>
            <person name="Kravitz S.A."/>
            <person name="Mouchard L."/>
            <person name="Reinert K."/>
            <person name="Remington K.A."/>
            <person name="Clark A.G."/>
            <person name="Waterman M.S."/>
            <person name="Eichler E.E."/>
            <person name="Adams M.D."/>
            <person name="Hunkapiller M.W."/>
            <person name="Myers E.W."/>
            <person name="Venter J.C."/>
        </authorList>
    </citation>
    <scope>NUCLEOTIDE SEQUENCE [LARGE SCALE GENOMIC DNA]</scope>
</reference>
<reference key="4">
    <citation type="journal article" date="2004" name="Genome Res.">
        <title>The status, quality, and expansion of the NIH full-length cDNA project: the Mammalian Gene Collection (MGC).</title>
        <authorList>
            <consortium name="The MGC Project Team"/>
        </authorList>
    </citation>
    <scope>NUCLEOTIDE SEQUENCE [LARGE SCALE MRNA] (ISOFORMS 1 AND 2)</scope>
    <source>
        <tissue>Retinal pigment epithelium</tissue>
        <tissue>Testis</tissue>
    </source>
</reference>
<reference key="5">
    <citation type="journal article" date="2011" name="BMC Syst. Biol.">
        <title>Initial characterization of the human central proteome.</title>
        <authorList>
            <person name="Burkard T.R."/>
            <person name="Planyavsky M."/>
            <person name="Kaupe I."/>
            <person name="Breitwieser F.P."/>
            <person name="Buerckstuemmer T."/>
            <person name="Bennett K.L."/>
            <person name="Superti-Furga G."/>
            <person name="Colinge J."/>
        </authorList>
    </citation>
    <scope>IDENTIFICATION BY MASS SPECTROMETRY [LARGE SCALE ANALYSIS]</scope>
</reference>
<reference key="6">
    <citation type="journal article" date="2015" name="Clin. Genet.">
        <title>Mutations in COG2 encoding a subunit of the conserved oligomeric golgi complex cause a congenital disorder of glycosylation.</title>
        <authorList>
            <person name="Kodera H."/>
            <person name="Ando N."/>
            <person name="Yuasa I."/>
            <person name="Wada Y."/>
            <person name="Tsurusaki Y."/>
            <person name="Nakashima M."/>
            <person name="Miyake N."/>
            <person name="Saitoh S."/>
            <person name="Matsumoto N."/>
            <person name="Saitsu H."/>
        </authorList>
    </citation>
    <scope>INVOLVEMENT IN CDG2Q</scope>
    <scope>VARIANT CDG2Q GLY-634</scope>
</reference>
<organism>
    <name type="scientific">Homo sapiens</name>
    <name type="common">Human</name>
    <dbReference type="NCBI Taxonomy" id="9606"/>
    <lineage>
        <taxon>Eukaryota</taxon>
        <taxon>Metazoa</taxon>
        <taxon>Chordata</taxon>
        <taxon>Craniata</taxon>
        <taxon>Vertebrata</taxon>
        <taxon>Euteleostomi</taxon>
        <taxon>Mammalia</taxon>
        <taxon>Eutheria</taxon>
        <taxon>Euarchontoglires</taxon>
        <taxon>Primates</taxon>
        <taxon>Haplorrhini</taxon>
        <taxon>Catarrhini</taxon>
        <taxon>Hominidae</taxon>
        <taxon>Homo</taxon>
    </lineage>
</organism>
<dbReference type="EMBL" id="Z34975">
    <property type="protein sequence ID" value="CAA84427.1"/>
    <property type="molecule type" value="mRNA"/>
</dbReference>
<dbReference type="EMBL" id="AL158214">
    <property type="status" value="NOT_ANNOTATED_CDS"/>
    <property type="molecule type" value="Genomic_DNA"/>
</dbReference>
<dbReference type="EMBL" id="CH471098">
    <property type="protein sequence ID" value="EAW69916.1"/>
    <property type="molecule type" value="Genomic_DNA"/>
</dbReference>
<dbReference type="EMBL" id="BC014960">
    <property type="protein sequence ID" value="AAH14960.1"/>
    <property type="molecule type" value="mRNA"/>
</dbReference>
<dbReference type="EMBL" id="BC051906">
    <property type="protein sequence ID" value="AAH51906.1"/>
    <property type="molecule type" value="mRNA"/>
</dbReference>
<dbReference type="CCDS" id="CCDS1584.1">
    <molecule id="Q14746-1"/>
</dbReference>
<dbReference type="CCDS" id="CCDS44329.1">
    <molecule id="Q14746-2"/>
</dbReference>
<dbReference type="PIR" id="A53542">
    <property type="entry name" value="A53542"/>
</dbReference>
<dbReference type="RefSeq" id="NP_001138508.1">
    <molecule id="Q14746-2"/>
    <property type="nucleotide sequence ID" value="NM_001145036.2"/>
</dbReference>
<dbReference type="RefSeq" id="NP_031383.1">
    <molecule id="Q14746-1"/>
    <property type="nucleotide sequence ID" value="NM_007357.3"/>
</dbReference>
<dbReference type="SMR" id="Q14746"/>
<dbReference type="BioGRID" id="116477">
    <property type="interactions" value="101"/>
</dbReference>
<dbReference type="ComplexPortal" id="CPX-6199">
    <property type="entry name" value="COG tethering complex"/>
</dbReference>
<dbReference type="CORUM" id="Q14746"/>
<dbReference type="FunCoup" id="Q14746">
    <property type="interactions" value="3220"/>
</dbReference>
<dbReference type="IntAct" id="Q14746">
    <property type="interactions" value="74"/>
</dbReference>
<dbReference type="STRING" id="9606.ENSP00000355629"/>
<dbReference type="iPTMnet" id="Q14746"/>
<dbReference type="PhosphoSitePlus" id="Q14746"/>
<dbReference type="BioMuta" id="COG2"/>
<dbReference type="DMDM" id="2498512"/>
<dbReference type="jPOST" id="Q14746"/>
<dbReference type="MassIVE" id="Q14746"/>
<dbReference type="PaxDb" id="9606-ENSP00000355629"/>
<dbReference type="PeptideAtlas" id="Q14746"/>
<dbReference type="ProteomicsDB" id="60153">
    <molecule id="Q14746-1"/>
</dbReference>
<dbReference type="ProteomicsDB" id="60154">
    <molecule id="Q14746-2"/>
</dbReference>
<dbReference type="Pumba" id="Q14746"/>
<dbReference type="TopDownProteomics" id="Q14746-1">
    <molecule id="Q14746-1"/>
</dbReference>
<dbReference type="Antibodypedia" id="34680">
    <property type="antibodies" value="217 antibodies from 26 providers"/>
</dbReference>
<dbReference type="DNASU" id="22796"/>
<dbReference type="Ensembl" id="ENST00000366668.7">
    <molecule id="Q14746-2"/>
    <property type="protein sequence ID" value="ENSP00000355628.3"/>
    <property type="gene ID" value="ENSG00000135775.14"/>
</dbReference>
<dbReference type="Ensembl" id="ENST00000366669.9">
    <molecule id="Q14746-1"/>
    <property type="protein sequence ID" value="ENSP00000355629.4"/>
    <property type="gene ID" value="ENSG00000135775.14"/>
</dbReference>
<dbReference type="GeneID" id="22796"/>
<dbReference type="KEGG" id="hsa:22796"/>
<dbReference type="MANE-Select" id="ENST00000366669.9">
    <property type="protein sequence ID" value="ENSP00000355629.4"/>
    <property type="RefSeq nucleotide sequence ID" value="NM_007357.3"/>
    <property type="RefSeq protein sequence ID" value="NP_031383.1"/>
</dbReference>
<dbReference type="UCSC" id="uc001htw.4">
    <molecule id="Q14746-1"/>
    <property type="organism name" value="human"/>
</dbReference>
<dbReference type="AGR" id="HGNC:6546"/>
<dbReference type="CTD" id="22796"/>
<dbReference type="DisGeNET" id="22796"/>
<dbReference type="GeneCards" id="COG2"/>
<dbReference type="GeneReviews" id="COG2"/>
<dbReference type="HGNC" id="HGNC:6546">
    <property type="gene designation" value="COG2"/>
</dbReference>
<dbReference type="HPA" id="ENSG00000135775">
    <property type="expression patterns" value="Tissue enhanced (parathyroid)"/>
</dbReference>
<dbReference type="MalaCards" id="COG2"/>
<dbReference type="MIM" id="606974">
    <property type="type" value="gene"/>
</dbReference>
<dbReference type="MIM" id="617395">
    <property type="type" value="phenotype"/>
</dbReference>
<dbReference type="neXtProt" id="NX_Q14746"/>
<dbReference type="OpenTargets" id="ENSG00000135775"/>
<dbReference type="Orphanet" id="435934">
    <property type="disease" value="COG2-CDG"/>
</dbReference>
<dbReference type="PharmGKB" id="PA26697"/>
<dbReference type="VEuPathDB" id="HostDB:ENSG00000135775"/>
<dbReference type="eggNOG" id="KOG2307">
    <property type="taxonomic scope" value="Eukaryota"/>
</dbReference>
<dbReference type="GeneTree" id="ENSGT00390000012040"/>
<dbReference type="HOGENOM" id="CLU_005470_0_0_1"/>
<dbReference type="InParanoid" id="Q14746"/>
<dbReference type="OMA" id="CWAEGVY"/>
<dbReference type="OrthoDB" id="332281at2759"/>
<dbReference type="PAN-GO" id="Q14746">
    <property type="GO annotations" value="3 GO annotations based on evolutionary models"/>
</dbReference>
<dbReference type="PhylomeDB" id="Q14746"/>
<dbReference type="TreeFam" id="TF105824"/>
<dbReference type="PathwayCommons" id="Q14746"/>
<dbReference type="Reactome" id="R-HSA-6807878">
    <property type="pathway name" value="COPI-mediated anterograde transport"/>
</dbReference>
<dbReference type="Reactome" id="R-HSA-6811438">
    <property type="pathway name" value="Intra-Golgi traffic"/>
</dbReference>
<dbReference type="Reactome" id="R-HSA-6811440">
    <property type="pathway name" value="Retrograde transport at the Trans-Golgi-Network"/>
</dbReference>
<dbReference type="SignaLink" id="Q14746"/>
<dbReference type="BioGRID-ORCS" id="22796">
    <property type="hits" value="382 hits in 1169 CRISPR screens"/>
</dbReference>
<dbReference type="GeneWiki" id="COG2"/>
<dbReference type="GenomeRNAi" id="22796"/>
<dbReference type="Pharos" id="Q14746">
    <property type="development level" value="Tbio"/>
</dbReference>
<dbReference type="PRO" id="PR:Q14746"/>
<dbReference type="Proteomes" id="UP000005640">
    <property type="component" value="Chromosome 1"/>
</dbReference>
<dbReference type="RNAct" id="Q14746">
    <property type="molecule type" value="protein"/>
</dbReference>
<dbReference type="Bgee" id="ENSG00000135775">
    <property type="expression patterns" value="Expressed in rectum and 199 other cell types or tissues"/>
</dbReference>
<dbReference type="ExpressionAtlas" id="Q14746">
    <property type="expression patterns" value="baseline and differential"/>
</dbReference>
<dbReference type="GO" id="GO:0000139">
    <property type="term" value="C:Golgi membrane"/>
    <property type="evidence" value="ECO:0000304"/>
    <property type="project" value="Reactome"/>
</dbReference>
<dbReference type="GO" id="GO:0005795">
    <property type="term" value="C:Golgi stack"/>
    <property type="evidence" value="ECO:0000314"/>
    <property type="project" value="UniProtKB"/>
</dbReference>
<dbReference type="GO" id="GO:0017119">
    <property type="term" value="C:Golgi transport complex"/>
    <property type="evidence" value="ECO:0000314"/>
    <property type="project" value="UniProtKB"/>
</dbReference>
<dbReference type="GO" id="GO:0032588">
    <property type="term" value="C:trans-Golgi network membrane"/>
    <property type="evidence" value="ECO:0000304"/>
    <property type="project" value="Reactome"/>
</dbReference>
<dbReference type="GO" id="GO:0044877">
    <property type="term" value="F:protein-containing complex binding"/>
    <property type="evidence" value="ECO:0007669"/>
    <property type="project" value="Ensembl"/>
</dbReference>
<dbReference type="GO" id="GO:0070085">
    <property type="term" value="P:glycosylation"/>
    <property type="evidence" value="ECO:0000315"/>
    <property type="project" value="ComplexPortal"/>
</dbReference>
<dbReference type="GO" id="GO:0007030">
    <property type="term" value="P:Golgi organization"/>
    <property type="evidence" value="ECO:0000315"/>
    <property type="project" value="UniProtKB"/>
</dbReference>
<dbReference type="GO" id="GO:0006891">
    <property type="term" value="P:intra-Golgi vesicle-mediated transport"/>
    <property type="evidence" value="ECO:0000315"/>
    <property type="project" value="UniProtKB"/>
</dbReference>
<dbReference type="GO" id="GO:0015031">
    <property type="term" value="P:protein transport"/>
    <property type="evidence" value="ECO:0007669"/>
    <property type="project" value="UniProtKB-KW"/>
</dbReference>
<dbReference type="GO" id="GO:0000301">
    <property type="term" value="P:retrograde transport, vesicle recycling within Golgi"/>
    <property type="evidence" value="ECO:0000315"/>
    <property type="project" value="ComplexPortal"/>
</dbReference>
<dbReference type="InterPro" id="IPR009316">
    <property type="entry name" value="COG2"/>
</dbReference>
<dbReference type="InterPro" id="IPR024603">
    <property type="entry name" value="COG_complex_COG2_C"/>
</dbReference>
<dbReference type="InterPro" id="IPR024602">
    <property type="entry name" value="COG_su2_N"/>
</dbReference>
<dbReference type="PANTHER" id="PTHR12961">
    <property type="entry name" value="CONSERVED OLIGOMERIC GOLGI COMPLEX COMPONENT 2"/>
    <property type="match status" value="1"/>
</dbReference>
<dbReference type="PANTHER" id="PTHR12961:SF0">
    <property type="entry name" value="CONSERVED OLIGOMERIC GOLGI COMPLEX SUBUNIT 2"/>
    <property type="match status" value="1"/>
</dbReference>
<dbReference type="Pfam" id="PF12022">
    <property type="entry name" value="COG2_C"/>
    <property type="match status" value="1"/>
</dbReference>
<dbReference type="Pfam" id="PF06148">
    <property type="entry name" value="COG2_N"/>
    <property type="match status" value="1"/>
</dbReference>
<feature type="chain" id="PRO_0000213495" description="Conserved oligomeric Golgi complex subunit 2">
    <location>
        <begin position="1"/>
        <end position="738"/>
    </location>
</feature>
<feature type="region of interest" description="Disordered" evidence="1">
    <location>
        <begin position="474"/>
        <end position="504"/>
    </location>
</feature>
<feature type="region of interest" description="Disordered" evidence="1">
    <location>
        <begin position="668"/>
        <end position="687"/>
    </location>
</feature>
<feature type="compositionally biased region" description="Polar residues" evidence="1">
    <location>
        <begin position="483"/>
        <end position="500"/>
    </location>
</feature>
<feature type="splice variant" id="VSP_042942" description="In isoform 2." evidence="3">
    <location>
        <position position="551"/>
    </location>
</feature>
<feature type="sequence variant" id="VAR_048757" description="In dbSNP:rs34796217.">
    <original>R</original>
    <variation>H</variation>
    <location>
        <position position="288"/>
    </location>
</feature>
<feature type="sequence variant" id="VAR_029274" description="In dbSNP:rs6681346.">
    <original>N</original>
    <variation>K</variation>
    <location>
        <position position="304"/>
    </location>
</feature>
<feature type="sequence variant" id="VAR_048758" description="In dbSNP:rs34109129.">
    <original>V</original>
    <variation>I</variation>
    <location>
        <position position="589"/>
    </location>
</feature>
<feature type="sequence variant" id="VAR_078769" description="In CDG2Q; dbSNP:rs1085307117." evidence="2">
    <original>W</original>
    <variation>G</variation>
    <location>
        <position position="634"/>
    </location>
</feature>